<reference key="1">
    <citation type="journal article" date="2008" name="J. Bacteriol.">
        <title>Genome sequence of Staphylococcus aureus strain Newman and comparative analysis of staphylococcal genomes: polymorphism and evolution of two major pathogenicity islands.</title>
        <authorList>
            <person name="Baba T."/>
            <person name="Bae T."/>
            <person name="Schneewind O."/>
            <person name="Takeuchi F."/>
            <person name="Hiramatsu K."/>
        </authorList>
    </citation>
    <scope>NUCLEOTIDE SEQUENCE [LARGE SCALE GENOMIC DNA]</scope>
    <source>
        <strain>Newman</strain>
    </source>
</reference>
<proteinExistence type="inferred from homology"/>
<comment type="function">
    <text evidence="1">Catalyzes the 2-thiolation of uridine at the wobble position (U34) of tRNA, leading to the formation of s(2)U34.</text>
</comment>
<comment type="catalytic activity">
    <reaction evidence="1">
        <text>S-sulfanyl-L-cysteinyl-[protein] + uridine(34) in tRNA + AH2 + ATP = 2-thiouridine(34) in tRNA + L-cysteinyl-[protein] + A + AMP + diphosphate + H(+)</text>
        <dbReference type="Rhea" id="RHEA:47032"/>
        <dbReference type="Rhea" id="RHEA-COMP:10131"/>
        <dbReference type="Rhea" id="RHEA-COMP:11726"/>
        <dbReference type="Rhea" id="RHEA-COMP:11727"/>
        <dbReference type="Rhea" id="RHEA-COMP:11728"/>
        <dbReference type="ChEBI" id="CHEBI:13193"/>
        <dbReference type="ChEBI" id="CHEBI:15378"/>
        <dbReference type="ChEBI" id="CHEBI:17499"/>
        <dbReference type="ChEBI" id="CHEBI:29950"/>
        <dbReference type="ChEBI" id="CHEBI:30616"/>
        <dbReference type="ChEBI" id="CHEBI:33019"/>
        <dbReference type="ChEBI" id="CHEBI:61963"/>
        <dbReference type="ChEBI" id="CHEBI:65315"/>
        <dbReference type="ChEBI" id="CHEBI:87170"/>
        <dbReference type="ChEBI" id="CHEBI:456215"/>
        <dbReference type="EC" id="2.8.1.13"/>
    </reaction>
</comment>
<comment type="subcellular location">
    <subcellularLocation>
        <location evidence="1">Cytoplasm</location>
    </subcellularLocation>
</comment>
<comment type="similarity">
    <text evidence="1">Belongs to the MnmA/TRMU family.</text>
</comment>
<name>MNMA_STAAE</name>
<gene>
    <name evidence="1" type="primary">mnmA</name>
    <name type="synonym">trmU</name>
    <name type="ordered locus">NWMN_1523</name>
</gene>
<evidence type="ECO:0000255" key="1">
    <source>
        <dbReference type="HAMAP-Rule" id="MF_00144"/>
    </source>
</evidence>
<sequence>MSNKDIRVVVGMSGGVDSSVTAHVLKEQGYDVIGIFMKNWDDTDENGVCTATEDYNDVIEVCNQIGIPYYAVNFEKEYWDKVFTYFLDEYKKGRTPNPDVMCNKEIKFKAFLDHAMNLGADYVATGHYARIHRHEDGHVEMLRGVDNNKDQTYFLNQLSQQQLSKVMFPIGDIEKSEVRRIAEEQGLVTAKKKDSTGICFIGEKNFKTFLSQYLPAQPGDMITLDGKKMGKHSGLMYYTIGQRHGLGIGGDGDPWFVVGKNLKDNVLYVEQGFHHDALYSDYLIASDYSFVNPEDNDLDQGFECTAKFRYRQKDTKVFVKRENDHALRVTFAEPVRAITPGQAVVFYQGDVCLGGATIDDVFKNEGQLNYVV</sequence>
<dbReference type="EC" id="2.8.1.13" evidence="1"/>
<dbReference type="EMBL" id="AP009351">
    <property type="protein sequence ID" value="BAF67795.1"/>
    <property type="molecule type" value="Genomic_DNA"/>
</dbReference>
<dbReference type="RefSeq" id="WP_000066097.1">
    <property type="nucleotide sequence ID" value="NZ_JBBIAE010000001.1"/>
</dbReference>
<dbReference type="SMR" id="A6QHG3"/>
<dbReference type="KEGG" id="sae:NWMN_1523"/>
<dbReference type="HOGENOM" id="CLU_035188_1_0_9"/>
<dbReference type="Proteomes" id="UP000006386">
    <property type="component" value="Chromosome"/>
</dbReference>
<dbReference type="GO" id="GO:0005737">
    <property type="term" value="C:cytoplasm"/>
    <property type="evidence" value="ECO:0007669"/>
    <property type="project" value="UniProtKB-SubCell"/>
</dbReference>
<dbReference type="GO" id="GO:0005524">
    <property type="term" value="F:ATP binding"/>
    <property type="evidence" value="ECO:0007669"/>
    <property type="project" value="UniProtKB-KW"/>
</dbReference>
<dbReference type="GO" id="GO:0000049">
    <property type="term" value="F:tRNA binding"/>
    <property type="evidence" value="ECO:0007669"/>
    <property type="project" value="UniProtKB-KW"/>
</dbReference>
<dbReference type="GO" id="GO:0103016">
    <property type="term" value="F:tRNA-uridine 2-sulfurtransferase activity"/>
    <property type="evidence" value="ECO:0007669"/>
    <property type="project" value="UniProtKB-EC"/>
</dbReference>
<dbReference type="GO" id="GO:0002143">
    <property type="term" value="P:tRNA wobble position uridine thiolation"/>
    <property type="evidence" value="ECO:0007669"/>
    <property type="project" value="TreeGrafter"/>
</dbReference>
<dbReference type="CDD" id="cd01998">
    <property type="entry name" value="MnmA_TRMU-like"/>
    <property type="match status" value="1"/>
</dbReference>
<dbReference type="FunFam" id="2.30.30.280:FF:000001">
    <property type="entry name" value="tRNA-specific 2-thiouridylase MnmA"/>
    <property type="match status" value="1"/>
</dbReference>
<dbReference type="FunFam" id="2.40.30.10:FF:000023">
    <property type="entry name" value="tRNA-specific 2-thiouridylase MnmA"/>
    <property type="match status" value="1"/>
</dbReference>
<dbReference type="FunFam" id="3.40.50.620:FF:000004">
    <property type="entry name" value="tRNA-specific 2-thiouridylase MnmA"/>
    <property type="match status" value="1"/>
</dbReference>
<dbReference type="Gene3D" id="2.30.30.280">
    <property type="entry name" value="Adenine nucleotide alpha hydrolases-like domains"/>
    <property type="match status" value="1"/>
</dbReference>
<dbReference type="Gene3D" id="3.40.50.620">
    <property type="entry name" value="HUPs"/>
    <property type="match status" value="1"/>
</dbReference>
<dbReference type="Gene3D" id="2.40.30.10">
    <property type="entry name" value="Translation factors"/>
    <property type="match status" value="1"/>
</dbReference>
<dbReference type="HAMAP" id="MF_00144">
    <property type="entry name" value="tRNA_thiouridyl_MnmA"/>
    <property type="match status" value="1"/>
</dbReference>
<dbReference type="InterPro" id="IPR004506">
    <property type="entry name" value="MnmA-like"/>
</dbReference>
<dbReference type="InterPro" id="IPR046885">
    <property type="entry name" value="MnmA-like_C"/>
</dbReference>
<dbReference type="InterPro" id="IPR046884">
    <property type="entry name" value="MnmA-like_central"/>
</dbReference>
<dbReference type="InterPro" id="IPR023382">
    <property type="entry name" value="MnmA-like_central_sf"/>
</dbReference>
<dbReference type="InterPro" id="IPR014729">
    <property type="entry name" value="Rossmann-like_a/b/a_fold"/>
</dbReference>
<dbReference type="NCBIfam" id="NF001138">
    <property type="entry name" value="PRK00143.1"/>
    <property type="match status" value="1"/>
</dbReference>
<dbReference type="NCBIfam" id="TIGR00420">
    <property type="entry name" value="trmU"/>
    <property type="match status" value="1"/>
</dbReference>
<dbReference type="PANTHER" id="PTHR11933:SF5">
    <property type="entry name" value="MITOCHONDRIAL TRNA-SPECIFIC 2-THIOURIDYLASE 1"/>
    <property type="match status" value="1"/>
</dbReference>
<dbReference type="PANTHER" id="PTHR11933">
    <property type="entry name" value="TRNA 5-METHYLAMINOMETHYL-2-THIOURIDYLATE -METHYLTRANSFERASE"/>
    <property type="match status" value="1"/>
</dbReference>
<dbReference type="Pfam" id="PF03054">
    <property type="entry name" value="tRNA_Me_trans"/>
    <property type="match status" value="1"/>
</dbReference>
<dbReference type="Pfam" id="PF20258">
    <property type="entry name" value="tRNA_Me_trans_C"/>
    <property type="match status" value="1"/>
</dbReference>
<dbReference type="Pfam" id="PF20259">
    <property type="entry name" value="tRNA_Me_trans_M"/>
    <property type="match status" value="1"/>
</dbReference>
<dbReference type="SUPFAM" id="SSF52402">
    <property type="entry name" value="Adenine nucleotide alpha hydrolases-like"/>
    <property type="match status" value="1"/>
</dbReference>
<protein>
    <recommendedName>
        <fullName evidence="1">tRNA-specific 2-thiouridylase MnmA</fullName>
        <ecNumber evidence="1">2.8.1.13</ecNumber>
    </recommendedName>
</protein>
<feature type="chain" id="PRO_1000071468" description="tRNA-specific 2-thiouridylase MnmA">
    <location>
        <begin position="1"/>
        <end position="372"/>
    </location>
</feature>
<feature type="region of interest" description="Interaction with target base in tRNA" evidence="1">
    <location>
        <begin position="97"/>
        <end position="99"/>
    </location>
</feature>
<feature type="region of interest" description="Interaction with tRNA" evidence="1">
    <location>
        <begin position="149"/>
        <end position="151"/>
    </location>
</feature>
<feature type="region of interest" description="Interaction with tRNA" evidence="1">
    <location>
        <begin position="309"/>
        <end position="310"/>
    </location>
</feature>
<feature type="active site" description="Nucleophile" evidence="1">
    <location>
        <position position="102"/>
    </location>
</feature>
<feature type="active site" description="Cysteine persulfide intermediate" evidence="1">
    <location>
        <position position="199"/>
    </location>
</feature>
<feature type="binding site" evidence="1">
    <location>
        <begin position="11"/>
        <end position="18"/>
    </location>
    <ligand>
        <name>ATP</name>
        <dbReference type="ChEBI" id="CHEBI:30616"/>
    </ligand>
</feature>
<feature type="binding site" evidence="1">
    <location>
        <position position="37"/>
    </location>
    <ligand>
        <name>ATP</name>
        <dbReference type="ChEBI" id="CHEBI:30616"/>
    </ligand>
</feature>
<feature type="binding site" evidence="1">
    <location>
        <position position="126"/>
    </location>
    <ligand>
        <name>ATP</name>
        <dbReference type="ChEBI" id="CHEBI:30616"/>
    </ligand>
</feature>
<feature type="site" description="Interaction with tRNA" evidence="1">
    <location>
        <position position="127"/>
    </location>
</feature>
<feature type="site" description="Interaction with tRNA" evidence="1">
    <location>
        <position position="342"/>
    </location>
</feature>
<feature type="disulfide bond" description="Alternate" evidence="1">
    <location>
        <begin position="102"/>
        <end position="199"/>
    </location>
</feature>
<organism>
    <name type="scientific">Staphylococcus aureus (strain Newman)</name>
    <dbReference type="NCBI Taxonomy" id="426430"/>
    <lineage>
        <taxon>Bacteria</taxon>
        <taxon>Bacillati</taxon>
        <taxon>Bacillota</taxon>
        <taxon>Bacilli</taxon>
        <taxon>Bacillales</taxon>
        <taxon>Staphylococcaceae</taxon>
        <taxon>Staphylococcus</taxon>
    </lineage>
</organism>
<keyword id="KW-0067">ATP-binding</keyword>
<keyword id="KW-0963">Cytoplasm</keyword>
<keyword id="KW-1015">Disulfide bond</keyword>
<keyword id="KW-0547">Nucleotide-binding</keyword>
<keyword id="KW-0694">RNA-binding</keyword>
<keyword id="KW-0808">Transferase</keyword>
<keyword id="KW-0819">tRNA processing</keyword>
<keyword id="KW-0820">tRNA-binding</keyword>
<accession>A6QHG3</accession>